<feature type="chain" id="PRO_0000047667" description="Zinc finger protein 576">
    <location>
        <begin position="1"/>
        <end position="170"/>
    </location>
</feature>
<feature type="zinc finger region" description="C2H2-type 1" evidence="1">
    <location>
        <begin position="34"/>
        <end position="57"/>
    </location>
</feature>
<feature type="zinc finger region" description="C2H2-type 2" evidence="1">
    <location>
        <begin position="71"/>
        <end position="93"/>
    </location>
</feature>
<feature type="zinc finger region" description="C2H2-type 3" evidence="1">
    <location>
        <begin position="112"/>
        <end position="134"/>
    </location>
</feature>
<feature type="zinc finger region" description="C2H2-type 4" evidence="1">
    <location>
        <begin position="143"/>
        <end position="165"/>
    </location>
</feature>
<feature type="region of interest" description="Disordered" evidence="2">
    <location>
        <begin position="1"/>
        <end position="29"/>
    </location>
</feature>
<feature type="compositionally biased region" description="Basic and acidic residues" evidence="2">
    <location>
        <begin position="8"/>
        <end position="20"/>
    </location>
</feature>
<feature type="sequence variant" id="VAR_023956" description="In dbSNP:rs17849705." evidence="3">
    <original>P</original>
    <variation>L</variation>
    <location>
        <position position="81"/>
    </location>
</feature>
<proteinExistence type="evidence at protein level"/>
<organism>
    <name type="scientific">Homo sapiens</name>
    <name type="common">Human</name>
    <dbReference type="NCBI Taxonomy" id="9606"/>
    <lineage>
        <taxon>Eukaryota</taxon>
        <taxon>Metazoa</taxon>
        <taxon>Chordata</taxon>
        <taxon>Craniata</taxon>
        <taxon>Vertebrata</taxon>
        <taxon>Euteleostomi</taxon>
        <taxon>Mammalia</taxon>
        <taxon>Eutheria</taxon>
        <taxon>Euarchontoglires</taxon>
        <taxon>Primates</taxon>
        <taxon>Haplorrhini</taxon>
        <taxon>Catarrhini</taxon>
        <taxon>Hominidae</taxon>
        <taxon>Homo</taxon>
    </lineage>
</organism>
<name>ZN576_HUMAN</name>
<reference key="1">
    <citation type="journal article" date="2004" name="Nat. Genet.">
        <title>Complete sequencing and characterization of 21,243 full-length human cDNAs.</title>
        <authorList>
            <person name="Ota T."/>
            <person name="Suzuki Y."/>
            <person name="Nishikawa T."/>
            <person name="Otsuki T."/>
            <person name="Sugiyama T."/>
            <person name="Irie R."/>
            <person name="Wakamatsu A."/>
            <person name="Hayashi K."/>
            <person name="Sato H."/>
            <person name="Nagai K."/>
            <person name="Kimura K."/>
            <person name="Makita H."/>
            <person name="Sekine M."/>
            <person name="Obayashi M."/>
            <person name="Nishi T."/>
            <person name="Shibahara T."/>
            <person name="Tanaka T."/>
            <person name="Ishii S."/>
            <person name="Yamamoto J."/>
            <person name="Saito K."/>
            <person name="Kawai Y."/>
            <person name="Isono Y."/>
            <person name="Nakamura Y."/>
            <person name="Nagahari K."/>
            <person name="Murakami K."/>
            <person name="Yasuda T."/>
            <person name="Iwayanagi T."/>
            <person name="Wagatsuma M."/>
            <person name="Shiratori A."/>
            <person name="Sudo H."/>
            <person name="Hosoiri T."/>
            <person name="Kaku Y."/>
            <person name="Kodaira H."/>
            <person name="Kondo H."/>
            <person name="Sugawara M."/>
            <person name="Takahashi M."/>
            <person name="Kanda K."/>
            <person name="Yokoi T."/>
            <person name="Furuya T."/>
            <person name="Kikkawa E."/>
            <person name="Omura Y."/>
            <person name="Abe K."/>
            <person name="Kamihara K."/>
            <person name="Katsuta N."/>
            <person name="Sato K."/>
            <person name="Tanikawa M."/>
            <person name="Yamazaki M."/>
            <person name="Ninomiya K."/>
            <person name="Ishibashi T."/>
            <person name="Yamashita H."/>
            <person name="Murakawa K."/>
            <person name="Fujimori K."/>
            <person name="Tanai H."/>
            <person name="Kimata M."/>
            <person name="Watanabe M."/>
            <person name="Hiraoka S."/>
            <person name="Chiba Y."/>
            <person name="Ishida S."/>
            <person name="Ono Y."/>
            <person name="Takiguchi S."/>
            <person name="Watanabe S."/>
            <person name="Yosida M."/>
            <person name="Hotuta T."/>
            <person name="Kusano J."/>
            <person name="Kanehori K."/>
            <person name="Takahashi-Fujii A."/>
            <person name="Hara H."/>
            <person name="Tanase T.-O."/>
            <person name="Nomura Y."/>
            <person name="Togiya S."/>
            <person name="Komai F."/>
            <person name="Hara R."/>
            <person name="Takeuchi K."/>
            <person name="Arita M."/>
            <person name="Imose N."/>
            <person name="Musashino K."/>
            <person name="Yuuki H."/>
            <person name="Oshima A."/>
            <person name="Sasaki N."/>
            <person name="Aotsuka S."/>
            <person name="Yoshikawa Y."/>
            <person name="Matsunawa H."/>
            <person name="Ichihara T."/>
            <person name="Shiohata N."/>
            <person name="Sano S."/>
            <person name="Moriya S."/>
            <person name="Momiyama H."/>
            <person name="Satoh N."/>
            <person name="Takami S."/>
            <person name="Terashima Y."/>
            <person name="Suzuki O."/>
            <person name="Nakagawa S."/>
            <person name="Senoh A."/>
            <person name="Mizoguchi H."/>
            <person name="Goto Y."/>
            <person name="Shimizu F."/>
            <person name="Wakebe H."/>
            <person name="Hishigaki H."/>
            <person name="Watanabe T."/>
            <person name="Sugiyama A."/>
            <person name="Takemoto M."/>
            <person name="Kawakami B."/>
            <person name="Yamazaki M."/>
            <person name="Watanabe K."/>
            <person name="Kumagai A."/>
            <person name="Itakura S."/>
            <person name="Fukuzumi Y."/>
            <person name="Fujimori Y."/>
            <person name="Komiyama M."/>
            <person name="Tashiro H."/>
            <person name="Tanigami A."/>
            <person name="Fujiwara T."/>
            <person name="Ono T."/>
            <person name="Yamada K."/>
            <person name="Fujii Y."/>
            <person name="Ozaki K."/>
            <person name="Hirao M."/>
            <person name="Ohmori Y."/>
            <person name="Kawabata A."/>
            <person name="Hikiji T."/>
            <person name="Kobatake N."/>
            <person name="Inagaki H."/>
            <person name="Ikema Y."/>
            <person name="Okamoto S."/>
            <person name="Okitani R."/>
            <person name="Kawakami T."/>
            <person name="Noguchi S."/>
            <person name="Itoh T."/>
            <person name="Shigeta K."/>
            <person name="Senba T."/>
            <person name="Matsumura K."/>
            <person name="Nakajima Y."/>
            <person name="Mizuno T."/>
            <person name="Morinaga M."/>
            <person name="Sasaki M."/>
            <person name="Togashi T."/>
            <person name="Oyama M."/>
            <person name="Hata H."/>
            <person name="Watanabe M."/>
            <person name="Komatsu T."/>
            <person name="Mizushima-Sugano J."/>
            <person name="Satoh T."/>
            <person name="Shirai Y."/>
            <person name="Takahashi Y."/>
            <person name="Nakagawa K."/>
            <person name="Okumura K."/>
            <person name="Nagase T."/>
            <person name="Nomura N."/>
            <person name="Kikuchi H."/>
            <person name="Masuho Y."/>
            <person name="Yamashita R."/>
            <person name="Nakai K."/>
            <person name="Yada T."/>
            <person name="Nakamura Y."/>
            <person name="Ohara O."/>
            <person name="Isogai T."/>
            <person name="Sugano S."/>
        </authorList>
    </citation>
    <scope>NUCLEOTIDE SEQUENCE [LARGE SCALE MRNA]</scope>
    <source>
        <tissue>Small intestine</tissue>
    </source>
</reference>
<reference key="2">
    <citation type="journal article" date="2004" name="Nature">
        <title>The DNA sequence and biology of human chromosome 19.</title>
        <authorList>
            <person name="Grimwood J."/>
            <person name="Gordon L.A."/>
            <person name="Olsen A.S."/>
            <person name="Terry A."/>
            <person name="Schmutz J."/>
            <person name="Lamerdin J.E."/>
            <person name="Hellsten U."/>
            <person name="Goodstein D."/>
            <person name="Couronne O."/>
            <person name="Tran-Gyamfi M."/>
            <person name="Aerts A."/>
            <person name="Altherr M."/>
            <person name="Ashworth L."/>
            <person name="Bajorek E."/>
            <person name="Black S."/>
            <person name="Branscomb E."/>
            <person name="Caenepeel S."/>
            <person name="Carrano A.V."/>
            <person name="Caoile C."/>
            <person name="Chan Y.M."/>
            <person name="Christensen M."/>
            <person name="Cleland C.A."/>
            <person name="Copeland A."/>
            <person name="Dalin E."/>
            <person name="Dehal P."/>
            <person name="Denys M."/>
            <person name="Detter J.C."/>
            <person name="Escobar J."/>
            <person name="Flowers D."/>
            <person name="Fotopulos D."/>
            <person name="Garcia C."/>
            <person name="Georgescu A.M."/>
            <person name="Glavina T."/>
            <person name="Gomez M."/>
            <person name="Gonzales E."/>
            <person name="Groza M."/>
            <person name="Hammon N."/>
            <person name="Hawkins T."/>
            <person name="Haydu L."/>
            <person name="Ho I."/>
            <person name="Huang W."/>
            <person name="Israni S."/>
            <person name="Jett J."/>
            <person name="Kadner K."/>
            <person name="Kimball H."/>
            <person name="Kobayashi A."/>
            <person name="Larionov V."/>
            <person name="Leem S.-H."/>
            <person name="Lopez F."/>
            <person name="Lou Y."/>
            <person name="Lowry S."/>
            <person name="Malfatti S."/>
            <person name="Martinez D."/>
            <person name="McCready P.M."/>
            <person name="Medina C."/>
            <person name="Morgan J."/>
            <person name="Nelson K."/>
            <person name="Nolan M."/>
            <person name="Ovcharenko I."/>
            <person name="Pitluck S."/>
            <person name="Pollard M."/>
            <person name="Popkie A.P."/>
            <person name="Predki P."/>
            <person name="Quan G."/>
            <person name="Ramirez L."/>
            <person name="Rash S."/>
            <person name="Retterer J."/>
            <person name="Rodriguez A."/>
            <person name="Rogers S."/>
            <person name="Salamov A."/>
            <person name="Salazar A."/>
            <person name="She X."/>
            <person name="Smith D."/>
            <person name="Slezak T."/>
            <person name="Solovyev V."/>
            <person name="Thayer N."/>
            <person name="Tice H."/>
            <person name="Tsai M."/>
            <person name="Ustaszewska A."/>
            <person name="Vo N."/>
            <person name="Wagner M."/>
            <person name="Wheeler J."/>
            <person name="Wu K."/>
            <person name="Xie G."/>
            <person name="Yang J."/>
            <person name="Dubchak I."/>
            <person name="Furey T.S."/>
            <person name="DeJong P."/>
            <person name="Dickson M."/>
            <person name="Gordon D."/>
            <person name="Eichler E.E."/>
            <person name="Pennacchio L.A."/>
            <person name="Richardson P."/>
            <person name="Stubbs L."/>
            <person name="Rokhsar D.S."/>
            <person name="Myers R.M."/>
            <person name="Rubin E.M."/>
            <person name="Lucas S.M."/>
        </authorList>
    </citation>
    <scope>NUCLEOTIDE SEQUENCE [LARGE SCALE GENOMIC DNA]</scope>
</reference>
<reference key="3">
    <citation type="journal article" date="2004" name="Genome Res.">
        <title>The status, quality, and expansion of the NIH full-length cDNA project: the Mammalian Gene Collection (MGC).</title>
        <authorList>
            <consortium name="The MGC Project Team"/>
        </authorList>
    </citation>
    <scope>NUCLEOTIDE SEQUENCE [LARGE SCALE MRNA]</scope>
    <scope>VARIANT LEU-81</scope>
    <source>
        <tissue>Lung</tissue>
    </source>
</reference>
<sequence length="170" mass="18890">MEDPNPEENMKQQDSPKERSPQSPGGNICHLGAPKCTRCLITFADSKFQERHMKREHPADFVAQKLQGVLFICFTCARSFPSSKALITHQRSHGPAAKPTLPVATTTAQPTFPCPDCGKTFGQAVSLRRHRQMHEVRAPPGTFACTECGQDFAQEAGLHQHYIRHARGEL</sequence>
<dbReference type="EMBL" id="AK026353">
    <property type="protein sequence ID" value="BAB15458.1"/>
    <property type="molecule type" value="mRNA"/>
</dbReference>
<dbReference type="EMBL" id="AC006276">
    <property type="status" value="NOT_ANNOTATED_CDS"/>
    <property type="molecule type" value="Genomic_DNA"/>
</dbReference>
<dbReference type="EMBL" id="BC002981">
    <property type="protein sequence ID" value="AAH02981.1"/>
    <property type="molecule type" value="mRNA"/>
</dbReference>
<dbReference type="CCDS" id="CCDS12625.1"/>
<dbReference type="RefSeq" id="NP_001138819.1">
    <property type="nucleotide sequence ID" value="NM_001145347.2"/>
</dbReference>
<dbReference type="RefSeq" id="NP_077303.1">
    <property type="nucleotide sequence ID" value="NM_024327.2"/>
</dbReference>
<dbReference type="SMR" id="Q9H609"/>
<dbReference type="BioGRID" id="122594">
    <property type="interactions" value="27"/>
</dbReference>
<dbReference type="FunCoup" id="Q9H609">
    <property type="interactions" value="72"/>
</dbReference>
<dbReference type="IntAct" id="Q9H609">
    <property type="interactions" value="26"/>
</dbReference>
<dbReference type="STRING" id="9606.ENSP00000337852"/>
<dbReference type="GlyGen" id="Q9H609">
    <property type="glycosylation" value="1 site, 1 O-linked glycan (1 site)"/>
</dbReference>
<dbReference type="iPTMnet" id="Q9H609"/>
<dbReference type="PhosphoSitePlus" id="Q9H609"/>
<dbReference type="BioMuta" id="ZNF576"/>
<dbReference type="DMDM" id="74761466"/>
<dbReference type="jPOST" id="Q9H609"/>
<dbReference type="MassIVE" id="Q9H609"/>
<dbReference type="PaxDb" id="9606-ENSP00000337852"/>
<dbReference type="PeptideAtlas" id="Q9H609"/>
<dbReference type="ProteomicsDB" id="80947"/>
<dbReference type="Pumba" id="Q9H609"/>
<dbReference type="Antibodypedia" id="31088">
    <property type="antibodies" value="22 antibodies from 7 providers"/>
</dbReference>
<dbReference type="DNASU" id="79177"/>
<dbReference type="Ensembl" id="ENST00000336564.5">
    <property type="protein sequence ID" value="ENSP00000337852.4"/>
    <property type="gene ID" value="ENSG00000124444.16"/>
</dbReference>
<dbReference type="Ensembl" id="ENST00000391965.6">
    <property type="protein sequence ID" value="ENSP00000375827.2"/>
    <property type="gene ID" value="ENSG00000124444.16"/>
</dbReference>
<dbReference type="Ensembl" id="ENST00000525771.1">
    <property type="protein sequence ID" value="ENSP00000436182.1"/>
    <property type="gene ID" value="ENSG00000124444.16"/>
</dbReference>
<dbReference type="Ensembl" id="ENST00000528387.5">
    <property type="protein sequence ID" value="ENSP00000435934.1"/>
    <property type="gene ID" value="ENSG00000124444.16"/>
</dbReference>
<dbReference type="Ensembl" id="ENST00000529930.1">
    <property type="protein sequence ID" value="ENSP00000435463.1"/>
    <property type="gene ID" value="ENSG00000124444.16"/>
</dbReference>
<dbReference type="Ensembl" id="ENST00000533118.5">
    <property type="protein sequence ID" value="ENSP00000435899.1"/>
    <property type="gene ID" value="ENSG00000124444.16"/>
</dbReference>
<dbReference type="GeneID" id="79177"/>
<dbReference type="KEGG" id="hsa:79177"/>
<dbReference type="MANE-Select" id="ENST00000336564.5">
    <property type="protein sequence ID" value="ENSP00000337852.4"/>
    <property type="RefSeq nucleotide sequence ID" value="NM_001145347.2"/>
    <property type="RefSeq protein sequence ID" value="NP_001138819.1"/>
</dbReference>
<dbReference type="UCSC" id="uc002owy.3">
    <property type="organism name" value="human"/>
</dbReference>
<dbReference type="AGR" id="HGNC:28357"/>
<dbReference type="CTD" id="79177"/>
<dbReference type="GeneCards" id="ZNF576"/>
<dbReference type="HGNC" id="HGNC:28357">
    <property type="gene designation" value="ZNF576"/>
</dbReference>
<dbReference type="HPA" id="ENSG00000124444">
    <property type="expression patterns" value="Low tissue specificity"/>
</dbReference>
<dbReference type="neXtProt" id="NX_Q9H609"/>
<dbReference type="OpenTargets" id="ENSG00000124444"/>
<dbReference type="PharmGKB" id="PA134950110"/>
<dbReference type="VEuPathDB" id="HostDB:ENSG00000124444"/>
<dbReference type="eggNOG" id="KOG1721">
    <property type="taxonomic scope" value="Eukaryota"/>
</dbReference>
<dbReference type="GeneTree" id="ENSGT00730000111407"/>
<dbReference type="HOGENOM" id="CLU_133887_0_0_1"/>
<dbReference type="InParanoid" id="Q9H609"/>
<dbReference type="OMA" id="SNQCFHC"/>
<dbReference type="OrthoDB" id="6910977at2759"/>
<dbReference type="PAN-GO" id="Q9H609">
    <property type="GO annotations" value="4 GO annotations based on evolutionary models"/>
</dbReference>
<dbReference type="PhylomeDB" id="Q9H609"/>
<dbReference type="TreeFam" id="TF350821"/>
<dbReference type="PathwayCommons" id="Q9H609"/>
<dbReference type="SignaLink" id="Q9H609"/>
<dbReference type="BioGRID-ORCS" id="79177">
    <property type="hits" value="9 hits in 1168 CRISPR screens"/>
</dbReference>
<dbReference type="GenomeRNAi" id="79177"/>
<dbReference type="Pharos" id="Q9H609">
    <property type="development level" value="Tdark"/>
</dbReference>
<dbReference type="PRO" id="PR:Q9H609"/>
<dbReference type="Proteomes" id="UP000005640">
    <property type="component" value="Chromosome 19"/>
</dbReference>
<dbReference type="RNAct" id="Q9H609">
    <property type="molecule type" value="protein"/>
</dbReference>
<dbReference type="Bgee" id="ENSG00000124444">
    <property type="expression patterns" value="Expressed in primordial germ cell in gonad and 181 other cell types or tissues"/>
</dbReference>
<dbReference type="ExpressionAtlas" id="Q9H609">
    <property type="expression patterns" value="baseline and differential"/>
</dbReference>
<dbReference type="GO" id="GO:0005634">
    <property type="term" value="C:nucleus"/>
    <property type="evidence" value="ECO:0007669"/>
    <property type="project" value="UniProtKB-SubCell"/>
</dbReference>
<dbReference type="GO" id="GO:0003677">
    <property type="term" value="F:DNA binding"/>
    <property type="evidence" value="ECO:0007669"/>
    <property type="project" value="UniProtKB-KW"/>
</dbReference>
<dbReference type="GO" id="GO:0003700">
    <property type="term" value="F:DNA-binding transcription factor activity"/>
    <property type="evidence" value="ECO:0000303"/>
    <property type="project" value="ARUK-UCL"/>
</dbReference>
<dbReference type="GO" id="GO:0008270">
    <property type="term" value="F:zinc ion binding"/>
    <property type="evidence" value="ECO:0007669"/>
    <property type="project" value="UniProtKB-KW"/>
</dbReference>
<dbReference type="FunFam" id="3.30.160.60:FF:001317">
    <property type="entry name" value="zinc finger protein 576 isoform X2"/>
    <property type="match status" value="1"/>
</dbReference>
<dbReference type="Gene3D" id="3.30.160.60">
    <property type="entry name" value="Classic Zinc Finger"/>
    <property type="match status" value="2"/>
</dbReference>
<dbReference type="InterPro" id="IPR050888">
    <property type="entry name" value="ZnF_C2H2-type_TF"/>
</dbReference>
<dbReference type="InterPro" id="IPR036236">
    <property type="entry name" value="Znf_C2H2_sf"/>
</dbReference>
<dbReference type="InterPro" id="IPR013087">
    <property type="entry name" value="Znf_C2H2_type"/>
</dbReference>
<dbReference type="PANTHER" id="PTHR24406">
    <property type="entry name" value="TRANSCRIPTIONAL REPRESSOR CTCFL-RELATED"/>
    <property type="match status" value="1"/>
</dbReference>
<dbReference type="Pfam" id="PF00096">
    <property type="entry name" value="zf-C2H2"/>
    <property type="match status" value="2"/>
</dbReference>
<dbReference type="Pfam" id="PF13912">
    <property type="entry name" value="zf-C2H2_6"/>
    <property type="match status" value="1"/>
</dbReference>
<dbReference type="SMART" id="SM00355">
    <property type="entry name" value="ZnF_C2H2"/>
    <property type="match status" value="4"/>
</dbReference>
<dbReference type="SUPFAM" id="SSF57667">
    <property type="entry name" value="beta-beta-alpha zinc fingers"/>
    <property type="match status" value="1"/>
</dbReference>
<dbReference type="PROSITE" id="PS00028">
    <property type="entry name" value="ZINC_FINGER_C2H2_1"/>
    <property type="match status" value="4"/>
</dbReference>
<dbReference type="PROSITE" id="PS50157">
    <property type="entry name" value="ZINC_FINGER_C2H2_2"/>
    <property type="match status" value="3"/>
</dbReference>
<accession>Q9H609</accession>
<accession>Q9BU03</accession>
<protein>
    <recommendedName>
        <fullName>Zinc finger protein 576</fullName>
    </recommendedName>
</protein>
<gene>
    <name type="primary">ZNF576</name>
</gene>
<keyword id="KW-0238">DNA-binding</keyword>
<keyword id="KW-0479">Metal-binding</keyword>
<keyword id="KW-0539">Nucleus</keyword>
<keyword id="KW-1267">Proteomics identification</keyword>
<keyword id="KW-1185">Reference proteome</keyword>
<keyword id="KW-0677">Repeat</keyword>
<keyword id="KW-0804">Transcription</keyword>
<keyword id="KW-0805">Transcription regulation</keyword>
<keyword id="KW-0862">Zinc</keyword>
<keyword id="KW-0863">Zinc-finger</keyword>
<evidence type="ECO:0000255" key="1">
    <source>
        <dbReference type="PROSITE-ProRule" id="PRU00042"/>
    </source>
</evidence>
<evidence type="ECO:0000256" key="2">
    <source>
        <dbReference type="SAM" id="MobiDB-lite"/>
    </source>
</evidence>
<evidence type="ECO:0000269" key="3">
    <source>
    </source>
</evidence>
<evidence type="ECO:0000305" key="4"/>
<comment type="function">
    <text>May be involved in transcriptional regulation.</text>
</comment>
<comment type="interaction">
    <interactant intactId="EBI-3921014">
        <id>Q9H609</id>
    </interactant>
    <interactant intactId="EBI-1047606">
        <id>Q9Y6B7</id>
        <label>AP4B1</label>
    </interactant>
    <organismsDiffer>false</organismsDiffer>
    <experiments>7</experiments>
</comment>
<comment type="interaction">
    <interactant intactId="EBI-3921014">
        <id>Q9H609</id>
    </interactant>
    <interactant intactId="EBI-351829">
        <id>O15145</id>
        <label>ARPC3</label>
    </interactant>
    <organismsDiffer>false</organismsDiffer>
    <experiments>3</experiments>
</comment>
<comment type="interaction">
    <interactant intactId="EBI-3921014">
        <id>Q9H609</id>
    </interactant>
    <interactant intactId="EBI-739566">
        <id>P19012</id>
        <label>KRT15</label>
    </interactant>
    <organismsDiffer>false</organismsDiffer>
    <experiments>3</experiments>
</comment>
<comment type="interaction">
    <interactant intactId="EBI-3921014">
        <id>Q9H609</id>
    </interactant>
    <interactant intactId="EBI-743122">
        <id>P43358</id>
        <label>MAGEA4</label>
    </interactant>
    <organismsDiffer>false</organismsDiffer>
    <experiments>5</experiments>
</comment>
<comment type="interaction">
    <interactant intactId="EBI-3921014">
        <id>Q9H609</id>
    </interactant>
    <interactant intactId="EBI-79165">
        <id>Q9NRD5</id>
        <label>PICK1</label>
    </interactant>
    <organismsDiffer>false</organismsDiffer>
    <experiments>3</experiments>
</comment>
<comment type="interaction">
    <interactant intactId="EBI-3921014">
        <id>Q9H609</id>
    </interactant>
    <interactant intactId="EBI-5235602">
        <id>Q86WC6</id>
        <label>PPP1R27</label>
    </interactant>
    <organismsDiffer>false</organismsDiffer>
    <experiments>3</experiments>
</comment>
<comment type="interaction">
    <interactant intactId="EBI-3921014">
        <id>Q9H609</id>
    </interactant>
    <interactant intactId="EBI-2623095">
        <id>Q9Y371</id>
        <label>SH3GLB1</label>
    </interactant>
    <organismsDiffer>false</organismsDiffer>
    <experiments>6</experiments>
</comment>
<comment type="interaction">
    <interactant intactId="EBI-3921014">
        <id>Q9H609</id>
    </interactant>
    <interactant intactId="EBI-717810">
        <id>Q08117</id>
        <label>TLE5</label>
    </interactant>
    <organismsDiffer>false</organismsDiffer>
    <experiments>3</experiments>
</comment>
<comment type="interaction">
    <interactant intactId="EBI-3921014">
        <id>Q9H609</id>
    </interactant>
    <interactant intactId="EBI-357430">
        <id>P61758</id>
        <label>VBP1</label>
    </interactant>
    <organismsDiffer>false</organismsDiffer>
    <experiments>3</experiments>
</comment>
<comment type="subcellular location">
    <subcellularLocation>
        <location evidence="4">Nucleus</location>
    </subcellularLocation>
</comment>
<comment type="similarity">
    <text evidence="4">Belongs to the krueppel C2H2-type zinc-finger protein family.</text>
</comment>
<comment type="caution">
    <text evidence="4">Overlaps in opposite strand with ZNF428.</text>
</comment>